<dbReference type="EMBL" id="AK058143">
    <property type="protein sequence ID" value="BAB71683.1"/>
    <property type="molecule type" value="mRNA"/>
</dbReference>
<dbReference type="EMBL" id="AF433663">
    <property type="protein sequence ID" value="AAP97314.1"/>
    <property type="molecule type" value="mRNA"/>
</dbReference>
<dbReference type="EMBL" id="AC008105">
    <property type="status" value="NOT_ANNOTATED_CDS"/>
    <property type="molecule type" value="Genomic_DNA"/>
</dbReference>
<dbReference type="EMBL" id="BC028124">
    <property type="protein sequence ID" value="AAH28124.1"/>
    <property type="molecule type" value="mRNA"/>
</dbReference>
<dbReference type="CCDS" id="CCDS32669.1"/>
<dbReference type="RefSeq" id="NP_689556.2">
    <property type="nucleotide sequence ID" value="NM_152343.3"/>
</dbReference>
<dbReference type="BioGRID" id="125887">
    <property type="interactions" value="4"/>
</dbReference>
<dbReference type="FunCoup" id="Q96LK8">
    <property type="interactions" value="108"/>
</dbReference>
<dbReference type="IntAct" id="Q96LK8">
    <property type="interactions" value="2"/>
</dbReference>
<dbReference type="STRING" id="9606.ENSP00000331532"/>
<dbReference type="GlyGen" id="Q96LK8">
    <property type="glycosylation" value="1 site, 6 N-linked glycans (1 site)"/>
</dbReference>
<dbReference type="iPTMnet" id="Q96LK8"/>
<dbReference type="PhosphoSitePlus" id="Q96LK8"/>
<dbReference type="BioMuta" id="SPATA32"/>
<dbReference type="DMDM" id="296439385"/>
<dbReference type="MassIVE" id="Q96LK8"/>
<dbReference type="PaxDb" id="9606-ENSP00000331532"/>
<dbReference type="PeptideAtlas" id="Q96LK8"/>
<dbReference type="ProteomicsDB" id="77218"/>
<dbReference type="Antibodypedia" id="17631">
    <property type="antibodies" value="14 antibodies from 8 providers"/>
</dbReference>
<dbReference type="DNASU" id="124783"/>
<dbReference type="Ensembl" id="ENST00000331780.5">
    <property type="protein sequence ID" value="ENSP00000331532.4"/>
    <property type="gene ID" value="ENSG00000184361.13"/>
</dbReference>
<dbReference type="GeneID" id="124783"/>
<dbReference type="KEGG" id="hsa:124783"/>
<dbReference type="MANE-Select" id="ENST00000331780.5">
    <property type="protein sequence ID" value="ENSP00000331532.4"/>
    <property type="RefSeq nucleotide sequence ID" value="NM_152343.3"/>
    <property type="RefSeq protein sequence ID" value="NP_689556.2"/>
</dbReference>
<dbReference type="UCSC" id="uc002iis.1">
    <property type="organism name" value="human"/>
</dbReference>
<dbReference type="AGR" id="HGNC:26349"/>
<dbReference type="CTD" id="124783"/>
<dbReference type="DisGeNET" id="124783"/>
<dbReference type="GeneCards" id="SPATA32"/>
<dbReference type="HGNC" id="HGNC:26349">
    <property type="gene designation" value="SPATA32"/>
</dbReference>
<dbReference type="HPA" id="ENSG00000184361">
    <property type="expression patterns" value="Tissue enriched (testis)"/>
</dbReference>
<dbReference type="neXtProt" id="NX_Q96LK8"/>
<dbReference type="OpenTargets" id="ENSG00000184361"/>
<dbReference type="PharmGKB" id="PA142672229"/>
<dbReference type="VEuPathDB" id="HostDB:ENSG00000184361"/>
<dbReference type="eggNOG" id="ENOG502RU2T">
    <property type="taxonomic scope" value="Eukaryota"/>
</dbReference>
<dbReference type="GeneTree" id="ENSGT00390000006879"/>
<dbReference type="HOGENOM" id="CLU_064427_0_0_1"/>
<dbReference type="InParanoid" id="Q96LK8"/>
<dbReference type="OMA" id="ACHHSIS"/>
<dbReference type="OrthoDB" id="9625284at2759"/>
<dbReference type="PAN-GO" id="Q96LK8">
    <property type="GO annotations" value="3 GO annotations based on evolutionary models"/>
</dbReference>
<dbReference type="PhylomeDB" id="Q96LK8"/>
<dbReference type="TreeFam" id="TF338309"/>
<dbReference type="PathwayCommons" id="Q96LK8"/>
<dbReference type="SignaLink" id="Q96LK8"/>
<dbReference type="BioGRID-ORCS" id="124783">
    <property type="hits" value="10 hits in 1136 CRISPR screens"/>
</dbReference>
<dbReference type="GenomeRNAi" id="124783"/>
<dbReference type="Pharos" id="Q96LK8">
    <property type="development level" value="Tdark"/>
</dbReference>
<dbReference type="PRO" id="PR:Q96LK8"/>
<dbReference type="Proteomes" id="UP000005640">
    <property type="component" value="Chromosome 17"/>
</dbReference>
<dbReference type="RNAct" id="Q96LK8">
    <property type="molecule type" value="protein"/>
</dbReference>
<dbReference type="Bgee" id="ENSG00000184361">
    <property type="expression patterns" value="Expressed in left testis and 83 other cell types or tissues"/>
</dbReference>
<dbReference type="ExpressionAtlas" id="Q96LK8">
    <property type="expression patterns" value="baseline and differential"/>
</dbReference>
<dbReference type="GO" id="GO:0048471">
    <property type="term" value="C:perinuclear region of cytoplasm"/>
    <property type="evidence" value="ECO:0000318"/>
    <property type="project" value="GO_Central"/>
</dbReference>
<dbReference type="GO" id="GO:0003779">
    <property type="term" value="F:actin binding"/>
    <property type="evidence" value="ECO:0000318"/>
    <property type="project" value="GO_Central"/>
</dbReference>
<dbReference type="GO" id="GO:0007283">
    <property type="term" value="P:spermatogenesis"/>
    <property type="evidence" value="ECO:0000318"/>
    <property type="project" value="GO_Central"/>
</dbReference>
<dbReference type="InterPro" id="IPR029297">
    <property type="entry name" value="SPATA32"/>
</dbReference>
<dbReference type="PANTHER" id="PTHR37338">
    <property type="entry name" value="SPERMATOGENESIS-ASSOCIATED PROTEIN 32"/>
    <property type="match status" value="1"/>
</dbReference>
<dbReference type="PANTHER" id="PTHR37338:SF1">
    <property type="entry name" value="SPERMATOGENESIS-ASSOCIATED PROTEIN 32"/>
    <property type="match status" value="1"/>
</dbReference>
<dbReference type="Pfam" id="PF15310">
    <property type="entry name" value="VAD1-2"/>
    <property type="match status" value="1"/>
</dbReference>
<organism>
    <name type="scientific">Homo sapiens</name>
    <name type="common">Human</name>
    <dbReference type="NCBI Taxonomy" id="9606"/>
    <lineage>
        <taxon>Eukaryota</taxon>
        <taxon>Metazoa</taxon>
        <taxon>Chordata</taxon>
        <taxon>Craniata</taxon>
        <taxon>Vertebrata</taxon>
        <taxon>Euteleostomi</taxon>
        <taxon>Mammalia</taxon>
        <taxon>Eutheria</taxon>
        <taxon>Euarchontoglires</taxon>
        <taxon>Primates</taxon>
        <taxon>Haplorrhini</taxon>
        <taxon>Catarrhini</taxon>
        <taxon>Hominidae</taxon>
        <taxon>Homo</taxon>
    </lineage>
</organism>
<sequence length="384" mass="42325">MGVTGAHGFPCCGKGSVEVAEMRDDLSQHQIQEEQELEADMLEQKPQLQVDLDLDPDPDPDPELEIGQVPALLESELYPALKLEAELDTEANSNEESDFEEPMQLVCKIESVHSNMGLPTPQTFRPWSLNSNCRSFTEENHVSACHHSISAQTSKHLFWANKLIQASEHSLQRAINMQLNNGSAGQPIRSPLREAIPTNALCSEEQLQIPDAHSAPPTTSSQAPSPLLSSDLPPPIDLTELITFASSLAMASSSRMDLPSLEHMMKAPPQEALEPSTEPLLTTVEEREPENHAETLPEKPREARAPLKSWSQEDKNFAQSYFDFSKPGIKRATIKGQIQLLQPPATSPLLQGSKEDSVPPGKEKENPLLVKIHFKLSAPTIPEK</sequence>
<name>SPT32_HUMAN</name>
<proteinExistence type="evidence at protein level"/>
<gene>
    <name type="primary">SPATA32</name>
    <name type="synonym">C17orf46</name>
    <name type="synonym">TEX34</name>
</gene>
<feature type="chain" id="PRO_0000282906" description="Spermatogenesis-associated protein 32">
    <location>
        <begin position="1"/>
        <end position="384"/>
    </location>
</feature>
<feature type="region of interest" description="Disordered" evidence="2">
    <location>
        <begin position="23"/>
        <end position="60"/>
    </location>
</feature>
<feature type="region of interest" description="Disordered" evidence="2">
    <location>
        <begin position="211"/>
        <end position="232"/>
    </location>
</feature>
<feature type="region of interest" description="Disordered" evidence="2">
    <location>
        <begin position="284"/>
        <end position="310"/>
    </location>
</feature>
<feature type="region of interest" description="Disordered" evidence="2">
    <location>
        <begin position="340"/>
        <end position="366"/>
    </location>
</feature>
<feature type="compositionally biased region" description="Low complexity" evidence="2">
    <location>
        <begin position="214"/>
        <end position="231"/>
    </location>
</feature>
<feature type="compositionally biased region" description="Basic and acidic residues" evidence="2">
    <location>
        <begin position="353"/>
        <end position="366"/>
    </location>
</feature>
<feature type="modified residue" description="Phosphoserine" evidence="1">
    <location>
        <position position="167"/>
    </location>
</feature>
<feature type="modified residue" description="Phosphoserine" evidence="1">
    <location>
        <position position="170"/>
    </location>
</feature>
<feature type="sequence variant" id="VAR_060279" description="In dbSNP:rs11651968." evidence="3 5">
    <original>V</original>
    <variation>M</variation>
    <location>
        <position position="142"/>
    </location>
</feature>
<feature type="sequence conflict" description="In Ref. 1; BAB71683." evidence="6" ref="1">
    <original>V</original>
    <variation>A</variation>
    <location>
        <position position="112"/>
    </location>
</feature>
<feature type="sequence conflict" description="In Ref. 2; AAP97314." evidence="6" ref="2">
    <original>TN</original>
    <variation>SK</variation>
    <location>
        <begin position="198"/>
        <end position="199"/>
    </location>
</feature>
<feature type="sequence conflict" description="In Ref. 2; AAP97314." evidence="6" ref="2">
    <original>TT</original>
    <variation>SK</variation>
    <location>
        <begin position="218"/>
        <end position="219"/>
    </location>
</feature>
<feature type="sequence conflict" description="In Ref. 2; AAP97314." evidence="6" ref="2">
    <original>A</original>
    <variation>E</variation>
    <location>
        <position position="223"/>
    </location>
</feature>
<feature type="sequence conflict" description="In Ref. 2; AAP97314." evidence="6" ref="2">
    <original>P</original>
    <variation>A</variation>
    <location>
        <position position="234"/>
    </location>
</feature>
<feature type="sequence conflict" description="In Ref. 2; AAP97314." evidence="6" ref="2">
    <original>D</original>
    <variation>E</variation>
    <location>
        <position position="237"/>
    </location>
</feature>
<feature type="sequence conflict" description="In Ref. 2; AAP97314." evidence="6" ref="2">
    <original>T</original>
    <variation>H</variation>
    <location>
        <position position="243"/>
    </location>
</feature>
<feature type="sequence conflict" description="In Ref. 2; AAP97314." evidence="6" ref="2">
    <original>A</original>
    <variation>D</variation>
    <location>
        <position position="251"/>
    </location>
</feature>
<feature type="sequence conflict" description="In Ref. 1; BAB71683." evidence="6" ref="1">
    <original>P</original>
    <variation>S</variation>
    <location>
        <position position="343"/>
    </location>
</feature>
<protein>
    <recommendedName>
        <fullName>Spermatogenesis-associated protein 32</fullName>
    </recommendedName>
    <alternativeName>
        <fullName>Testis-expressed protein 34</fullName>
    </alternativeName>
</protein>
<comment type="subunit">
    <text evidence="4">Interacts with syntaxin-1 and ACTB.</text>
</comment>
<comment type="interaction">
    <interactant intactId="EBI-12849978">
        <id>Q96LK8</id>
    </interactant>
    <interactant intactId="EBI-741158">
        <id>Q96HA8</id>
        <label>NTAQ1</label>
    </interactant>
    <organismsDiffer>false</organismsDiffer>
    <experiments>3</experiments>
</comment>
<comment type="interaction">
    <interactant intactId="EBI-12849978">
        <id>Q96LK8</id>
    </interactant>
    <interactant intactId="EBI-79893">
        <id>Q92569</id>
        <label>PIK3R3</label>
    </interactant>
    <organismsDiffer>false</organismsDiffer>
    <experiments>3</experiments>
</comment>
<comment type="tissue specificity">
    <text>Detected in testis, and on the acrosomal cap of spermatids.</text>
</comment>
<accession>Q96LK8</accession>
<accession>Q7Z4U1</accession>
<accession>Q8N6V6</accession>
<keyword id="KW-0597">Phosphoprotein</keyword>
<keyword id="KW-1267">Proteomics identification</keyword>
<keyword id="KW-1185">Reference proteome</keyword>
<evidence type="ECO:0000250" key="1">
    <source>
        <dbReference type="UniProtKB" id="Q66H17"/>
    </source>
</evidence>
<evidence type="ECO:0000256" key="2">
    <source>
        <dbReference type="SAM" id="MobiDB-lite"/>
    </source>
</evidence>
<evidence type="ECO:0000269" key="3">
    <source>
    </source>
</evidence>
<evidence type="ECO:0000269" key="4">
    <source>
    </source>
</evidence>
<evidence type="ECO:0000269" key="5">
    <source ref="2"/>
</evidence>
<evidence type="ECO:0000305" key="6"/>
<reference key="1">
    <citation type="journal article" date="2004" name="Nat. Genet.">
        <title>Complete sequencing and characterization of 21,243 full-length human cDNAs.</title>
        <authorList>
            <person name="Ota T."/>
            <person name="Suzuki Y."/>
            <person name="Nishikawa T."/>
            <person name="Otsuki T."/>
            <person name="Sugiyama T."/>
            <person name="Irie R."/>
            <person name="Wakamatsu A."/>
            <person name="Hayashi K."/>
            <person name="Sato H."/>
            <person name="Nagai K."/>
            <person name="Kimura K."/>
            <person name="Makita H."/>
            <person name="Sekine M."/>
            <person name="Obayashi M."/>
            <person name="Nishi T."/>
            <person name="Shibahara T."/>
            <person name="Tanaka T."/>
            <person name="Ishii S."/>
            <person name="Yamamoto J."/>
            <person name="Saito K."/>
            <person name="Kawai Y."/>
            <person name="Isono Y."/>
            <person name="Nakamura Y."/>
            <person name="Nagahari K."/>
            <person name="Murakami K."/>
            <person name="Yasuda T."/>
            <person name="Iwayanagi T."/>
            <person name="Wagatsuma M."/>
            <person name="Shiratori A."/>
            <person name="Sudo H."/>
            <person name="Hosoiri T."/>
            <person name="Kaku Y."/>
            <person name="Kodaira H."/>
            <person name="Kondo H."/>
            <person name="Sugawara M."/>
            <person name="Takahashi M."/>
            <person name="Kanda K."/>
            <person name="Yokoi T."/>
            <person name="Furuya T."/>
            <person name="Kikkawa E."/>
            <person name="Omura Y."/>
            <person name="Abe K."/>
            <person name="Kamihara K."/>
            <person name="Katsuta N."/>
            <person name="Sato K."/>
            <person name="Tanikawa M."/>
            <person name="Yamazaki M."/>
            <person name="Ninomiya K."/>
            <person name="Ishibashi T."/>
            <person name="Yamashita H."/>
            <person name="Murakawa K."/>
            <person name="Fujimori K."/>
            <person name="Tanai H."/>
            <person name="Kimata M."/>
            <person name="Watanabe M."/>
            <person name="Hiraoka S."/>
            <person name="Chiba Y."/>
            <person name="Ishida S."/>
            <person name="Ono Y."/>
            <person name="Takiguchi S."/>
            <person name="Watanabe S."/>
            <person name="Yosida M."/>
            <person name="Hotuta T."/>
            <person name="Kusano J."/>
            <person name="Kanehori K."/>
            <person name="Takahashi-Fujii A."/>
            <person name="Hara H."/>
            <person name="Tanase T.-O."/>
            <person name="Nomura Y."/>
            <person name="Togiya S."/>
            <person name="Komai F."/>
            <person name="Hara R."/>
            <person name="Takeuchi K."/>
            <person name="Arita M."/>
            <person name="Imose N."/>
            <person name="Musashino K."/>
            <person name="Yuuki H."/>
            <person name="Oshima A."/>
            <person name="Sasaki N."/>
            <person name="Aotsuka S."/>
            <person name="Yoshikawa Y."/>
            <person name="Matsunawa H."/>
            <person name="Ichihara T."/>
            <person name="Shiohata N."/>
            <person name="Sano S."/>
            <person name="Moriya S."/>
            <person name="Momiyama H."/>
            <person name="Satoh N."/>
            <person name="Takami S."/>
            <person name="Terashima Y."/>
            <person name="Suzuki O."/>
            <person name="Nakagawa S."/>
            <person name="Senoh A."/>
            <person name="Mizoguchi H."/>
            <person name="Goto Y."/>
            <person name="Shimizu F."/>
            <person name="Wakebe H."/>
            <person name="Hishigaki H."/>
            <person name="Watanabe T."/>
            <person name="Sugiyama A."/>
            <person name="Takemoto M."/>
            <person name="Kawakami B."/>
            <person name="Yamazaki M."/>
            <person name="Watanabe K."/>
            <person name="Kumagai A."/>
            <person name="Itakura S."/>
            <person name="Fukuzumi Y."/>
            <person name="Fujimori Y."/>
            <person name="Komiyama M."/>
            <person name="Tashiro H."/>
            <person name="Tanigami A."/>
            <person name="Fujiwara T."/>
            <person name="Ono T."/>
            <person name="Yamada K."/>
            <person name="Fujii Y."/>
            <person name="Ozaki K."/>
            <person name="Hirao M."/>
            <person name="Ohmori Y."/>
            <person name="Kawabata A."/>
            <person name="Hikiji T."/>
            <person name="Kobatake N."/>
            <person name="Inagaki H."/>
            <person name="Ikema Y."/>
            <person name="Okamoto S."/>
            <person name="Okitani R."/>
            <person name="Kawakami T."/>
            <person name="Noguchi S."/>
            <person name="Itoh T."/>
            <person name="Shigeta K."/>
            <person name="Senba T."/>
            <person name="Matsumura K."/>
            <person name="Nakajima Y."/>
            <person name="Mizuno T."/>
            <person name="Morinaga M."/>
            <person name="Sasaki M."/>
            <person name="Togashi T."/>
            <person name="Oyama M."/>
            <person name="Hata H."/>
            <person name="Watanabe M."/>
            <person name="Komatsu T."/>
            <person name="Mizushima-Sugano J."/>
            <person name="Satoh T."/>
            <person name="Shirai Y."/>
            <person name="Takahashi Y."/>
            <person name="Nakagawa K."/>
            <person name="Okumura K."/>
            <person name="Nagase T."/>
            <person name="Nomura N."/>
            <person name="Kikuchi H."/>
            <person name="Masuho Y."/>
            <person name="Yamashita R."/>
            <person name="Nakai K."/>
            <person name="Yada T."/>
            <person name="Nakamura Y."/>
            <person name="Ohara O."/>
            <person name="Isogai T."/>
            <person name="Sugano S."/>
        </authorList>
    </citation>
    <scope>NUCLEOTIDE SEQUENCE [LARGE SCALE MRNA]</scope>
    <source>
        <tissue>Testis</tissue>
    </source>
</reference>
<reference key="2">
    <citation type="submission" date="2001-10" db="EMBL/GenBank/DDBJ databases">
        <authorList>
            <person name="Guo J.H."/>
            <person name="Yu L."/>
        </authorList>
    </citation>
    <scope>NUCLEOTIDE SEQUENCE [LARGE SCALE MRNA]</scope>
    <scope>VARIANT MET-142</scope>
</reference>
<reference key="3">
    <citation type="journal article" date="2006" name="Nature">
        <title>DNA sequence of human chromosome 17 and analysis of rearrangement in the human lineage.</title>
        <authorList>
            <person name="Zody M.C."/>
            <person name="Garber M."/>
            <person name="Adams D.J."/>
            <person name="Sharpe T."/>
            <person name="Harrow J."/>
            <person name="Lupski J.R."/>
            <person name="Nicholson C."/>
            <person name="Searle S.M."/>
            <person name="Wilming L."/>
            <person name="Young S.K."/>
            <person name="Abouelleil A."/>
            <person name="Allen N.R."/>
            <person name="Bi W."/>
            <person name="Bloom T."/>
            <person name="Borowsky M.L."/>
            <person name="Bugalter B.E."/>
            <person name="Butler J."/>
            <person name="Chang J.L."/>
            <person name="Chen C.-K."/>
            <person name="Cook A."/>
            <person name="Corum B."/>
            <person name="Cuomo C.A."/>
            <person name="de Jong P.J."/>
            <person name="DeCaprio D."/>
            <person name="Dewar K."/>
            <person name="FitzGerald M."/>
            <person name="Gilbert J."/>
            <person name="Gibson R."/>
            <person name="Gnerre S."/>
            <person name="Goldstein S."/>
            <person name="Grafham D.V."/>
            <person name="Grocock R."/>
            <person name="Hafez N."/>
            <person name="Hagopian D.S."/>
            <person name="Hart E."/>
            <person name="Norman C.H."/>
            <person name="Humphray S."/>
            <person name="Jaffe D.B."/>
            <person name="Jones M."/>
            <person name="Kamal M."/>
            <person name="Khodiyar V.K."/>
            <person name="LaButti K."/>
            <person name="Laird G."/>
            <person name="Lehoczky J."/>
            <person name="Liu X."/>
            <person name="Lokyitsang T."/>
            <person name="Loveland J."/>
            <person name="Lui A."/>
            <person name="Macdonald P."/>
            <person name="Major J.E."/>
            <person name="Matthews L."/>
            <person name="Mauceli E."/>
            <person name="McCarroll S.A."/>
            <person name="Mihalev A.H."/>
            <person name="Mudge J."/>
            <person name="Nguyen C."/>
            <person name="Nicol R."/>
            <person name="O'Leary S.B."/>
            <person name="Osoegawa K."/>
            <person name="Schwartz D.C."/>
            <person name="Shaw-Smith C."/>
            <person name="Stankiewicz P."/>
            <person name="Steward C."/>
            <person name="Swarbreck D."/>
            <person name="Venkataraman V."/>
            <person name="Whittaker C.A."/>
            <person name="Yang X."/>
            <person name="Zimmer A.R."/>
            <person name="Bradley A."/>
            <person name="Hubbard T."/>
            <person name="Birren B.W."/>
            <person name="Rogers J."/>
            <person name="Lander E.S."/>
            <person name="Nusbaum C."/>
        </authorList>
    </citation>
    <scope>NUCLEOTIDE SEQUENCE [LARGE SCALE GENOMIC DNA]</scope>
</reference>
<reference key="4">
    <citation type="journal article" date="2004" name="Genome Res.">
        <title>The status, quality, and expansion of the NIH full-length cDNA project: the Mammalian Gene Collection (MGC).</title>
        <authorList>
            <consortium name="The MGC Project Team"/>
        </authorList>
    </citation>
    <scope>NUCLEOTIDE SEQUENCE [LARGE SCALE MRNA]</scope>
    <scope>VARIANT MET-142</scope>
    <source>
        <tissue>Brain</tissue>
    </source>
</reference>
<reference key="5">
    <citation type="journal article" date="2008" name="Mol. Hum. Reprod.">
        <title>Characterization of an acrosome protein VAD1.2/AEP2 which is differentially expressed in spermatogenesis.</title>
        <authorList>
            <person name="Lee K.F."/>
            <person name="Tam Y.T."/>
            <person name="Zuo Y."/>
            <person name="Cheong A.W."/>
            <person name="Pang R.T."/>
            <person name="Lee N.P."/>
            <person name="Shum C.K."/>
            <person name="Tam P.C."/>
            <person name="Cheung A.N."/>
            <person name="Yang Z.M."/>
            <person name="Yeung W.S."/>
            <person name="Luk J.M."/>
        </authorList>
    </citation>
    <scope>INTERACTION WITH SYNTAXIN-1 AND ACTB</scope>
</reference>